<gene>
    <name type="ordered locus">YBR064W</name>
    <name type="ORF">YBR0612</name>
</gene>
<keyword id="KW-0472">Membrane</keyword>
<keyword id="KW-0812">Transmembrane</keyword>
<keyword id="KW-1133">Transmembrane helix</keyword>
<evidence type="ECO:0000255" key="1"/>
<evidence type="ECO:0000305" key="2"/>
<evidence type="ECO:0000305" key="3">
    <source>
    </source>
</evidence>
<reference key="1">
    <citation type="journal article" date="1994" name="EMBO J.">
        <title>Complete DNA sequence of yeast chromosome II.</title>
        <authorList>
            <person name="Feldmann H."/>
            <person name="Aigle M."/>
            <person name="Aljinovic G."/>
            <person name="Andre B."/>
            <person name="Baclet M.C."/>
            <person name="Barthe C."/>
            <person name="Baur A."/>
            <person name="Becam A.-M."/>
            <person name="Biteau N."/>
            <person name="Boles E."/>
            <person name="Brandt T."/>
            <person name="Brendel M."/>
            <person name="Brueckner M."/>
            <person name="Bussereau F."/>
            <person name="Christiansen C."/>
            <person name="Contreras R."/>
            <person name="Crouzet M."/>
            <person name="Cziepluch C."/>
            <person name="Demolis N."/>
            <person name="Delaveau T."/>
            <person name="Doignon F."/>
            <person name="Domdey H."/>
            <person name="Duesterhus S."/>
            <person name="Dubois E."/>
            <person name="Dujon B."/>
            <person name="El Bakkoury M."/>
            <person name="Entian K.-D."/>
            <person name="Feuermann M."/>
            <person name="Fiers W."/>
            <person name="Fobo G.M."/>
            <person name="Fritz C."/>
            <person name="Gassenhuber J."/>
            <person name="Glansdorff N."/>
            <person name="Goffeau A."/>
            <person name="Grivell L.A."/>
            <person name="de Haan M."/>
            <person name="Hein C."/>
            <person name="Herbert C.J."/>
            <person name="Hollenberg C.P."/>
            <person name="Holmstroem K."/>
            <person name="Jacq C."/>
            <person name="Jacquet M."/>
            <person name="Jauniaux J.-C."/>
            <person name="Jonniaux J.-L."/>
            <person name="Kallesoee T."/>
            <person name="Kiesau P."/>
            <person name="Kirchrath L."/>
            <person name="Koetter P."/>
            <person name="Korol S."/>
            <person name="Liebl S."/>
            <person name="Logghe M."/>
            <person name="Lohan A.J.E."/>
            <person name="Louis E.J."/>
            <person name="Li Z.Y."/>
            <person name="Maat M.J."/>
            <person name="Mallet L."/>
            <person name="Mannhaupt G."/>
            <person name="Messenguy F."/>
            <person name="Miosga T."/>
            <person name="Molemans F."/>
            <person name="Mueller S."/>
            <person name="Nasr F."/>
            <person name="Obermaier B."/>
            <person name="Perea J."/>
            <person name="Pierard A."/>
            <person name="Piravandi E."/>
            <person name="Pohl F.M."/>
            <person name="Pohl T.M."/>
            <person name="Potier S."/>
            <person name="Proft M."/>
            <person name="Purnelle B."/>
            <person name="Ramezani Rad M."/>
            <person name="Rieger M."/>
            <person name="Rose M."/>
            <person name="Schaaff-Gerstenschlaeger I."/>
            <person name="Scherens B."/>
            <person name="Schwarzlose C."/>
            <person name="Skala J."/>
            <person name="Slonimski P.P."/>
            <person name="Smits P.H.M."/>
            <person name="Souciet J.-L."/>
            <person name="Steensma H.Y."/>
            <person name="Stucka R."/>
            <person name="Urrestarazu L.A."/>
            <person name="van der Aart Q.J.M."/>
            <person name="Van Dyck L."/>
            <person name="Vassarotti A."/>
            <person name="Vetter I."/>
            <person name="Vierendeels F."/>
            <person name="Vissers S."/>
            <person name="Wagner G."/>
            <person name="de Wergifosse P."/>
            <person name="Wolfe K.H."/>
            <person name="Zagulski M."/>
            <person name="Zimmermann F.K."/>
            <person name="Mewes H.-W."/>
            <person name="Kleine K."/>
        </authorList>
    </citation>
    <scope>NUCLEOTIDE SEQUENCE [LARGE SCALE GENOMIC DNA]</scope>
    <source>
        <strain>ATCC 204508 / S288c</strain>
    </source>
</reference>
<reference key="2">
    <citation type="journal article" date="2014" name="G3 (Bethesda)">
        <title>The reference genome sequence of Saccharomyces cerevisiae: Then and now.</title>
        <authorList>
            <person name="Engel S.R."/>
            <person name="Dietrich F.S."/>
            <person name="Fisk D.G."/>
            <person name="Binkley G."/>
            <person name="Balakrishnan R."/>
            <person name="Costanzo M.C."/>
            <person name="Dwight S.S."/>
            <person name="Hitz B.C."/>
            <person name="Karra K."/>
            <person name="Nash R.S."/>
            <person name="Weng S."/>
            <person name="Wong E.D."/>
            <person name="Lloyd P."/>
            <person name="Skrzypek M.S."/>
            <person name="Miyasato S.R."/>
            <person name="Simison M."/>
            <person name="Cherry J.M."/>
        </authorList>
    </citation>
    <scope>GENOME REANNOTATION</scope>
    <source>
        <strain>ATCC 204508 / S288c</strain>
    </source>
</reference>
<reference key="3">
    <citation type="journal article" date="2006" name="Proc. Natl. Acad. Sci. U.S.A.">
        <title>A global topology map of the Saccharomyces cerevisiae membrane proteome.</title>
        <authorList>
            <person name="Kim H."/>
            <person name="Melen K."/>
            <person name="Oesterberg M."/>
            <person name="von Heijne G."/>
        </authorList>
    </citation>
    <scope>TOPOLOGY [LARGE SCALE ANALYSIS]</scope>
    <source>
        <strain>ATCC 208353 / W303-1A</strain>
    </source>
</reference>
<sequence length="142" mass="16039">MDMVSPVLNLQSSILGELVGIIGKVFFLLIEEIKYPIITPKIIVDAQISSWSLFFFASICNLSAKFREPIVTTSSIISLMESEKDLKNVNEYFQIMAKMLFILENKIVVSLFVVFNISVLIIVKSEPYSYGKVLFKPSSSIF</sequence>
<protein>
    <recommendedName>
        <fullName>Putative uncharacterized membrane protein YBR064W</fullName>
    </recommendedName>
</protein>
<name>YBR4_YEAST</name>
<dbReference type="EMBL" id="Z35932">
    <property type="protein sequence ID" value="CAA85007.1"/>
    <property type="molecule type" value="Genomic_DNA"/>
</dbReference>
<dbReference type="PIR" id="S45924">
    <property type="entry name" value="S45924"/>
</dbReference>
<dbReference type="SMR" id="P38240"/>
<dbReference type="DIP" id="DIP-2036N"/>
<dbReference type="IntAct" id="P38240">
    <property type="interactions" value="2"/>
</dbReference>
<dbReference type="PaxDb" id="4932-YBR064W"/>
<dbReference type="EnsemblFungi" id="YBR064W_mRNA">
    <property type="protein sequence ID" value="YBR064W"/>
    <property type="gene ID" value="YBR064W"/>
</dbReference>
<dbReference type="AGR" id="SGD:S000000268"/>
<dbReference type="SGD" id="S000000268">
    <property type="gene designation" value="YBR064W"/>
</dbReference>
<dbReference type="HOGENOM" id="CLU_1817316_0_0_1"/>
<dbReference type="GO" id="GO:0016020">
    <property type="term" value="C:membrane"/>
    <property type="evidence" value="ECO:0007669"/>
    <property type="project" value="UniProtKB-SubCell"/>
</dbReference>
<organism>
    <name type="scientific">Saccharomyces cerevisiae (strain ATCC 204508 / S288c)</name>
    <name type="common">Baker's yeast</name>
    <dbReference type="NCBI Taxonomy" id="559292"/>
    <lineage>
        <taxon>Eukaryota</taxon>
        <taxon>Fungi</taxon>
        <taxon>Dikarya</taxon>
        <taxon>Ascomycota</taxon>
        <taxon>Saccharomycotina</taxon>
        <taxon>Saccharomycetes</taxon>
        <taxon>Saccharomycetales</taxon>
        <taxon>Saccharomycetaceae</taxon>
        <taxon>Saccharomyces</taxon>
    </lineage>
</organism>
<accession>P38240</accession>
<feature type="chain" id="PRO_0000202477" description="Putative uncharacterized membrane protein YBR064W">
    <location>
        <begin position="1"/>
        <end position="142"/>
    </location>
</feature>
<feature type="topological domain" description="Cytoplasmic" evidence="1">
    <location>
        <begin position="1"/>
        <end position="9"/>
    </location>
</feature>
<feature type="transmembrane region" description="Helical" evidence="1">
    <location>
        <begin position="10"/>
        <end position="30"/>
    </location>
</feature>
<feature type="topological domain" description="Extracellular" evidence="1">
    <location>
        <begin position="31"/>
        <end position="41"/>
    </location>
</feature>
<feature type="transmembrane region" description="Helical" evidence="1">
    <location>
        <begin position="42"/>
        <end position="62"/>
    </location>
</feature>
<feature type="topological domain" description="Cytoplasmic" evidence="1">
    <location>
        <begin position="63"/>
        <end position="101"/>
    </location>
</feature>
<feature type="transmembrane region" description="Helical" evidence="1">
    <location>
        <begin position="102"/>
        <end position="122"/>
    </location>
</feature>
<feature type="topological domain" description="Extracellular" evidence="1">
    <location>
        <begin position="123"/>
        <end position="142"/>
    </location>
</feature>
<proteinExistence type="uncertain"/>
<comment type="subcellular location">
    <subcellularLocation>
        <location>Membrane</location>
        <topology>Multi-pass membrane protein</topology>
    </subcellularLocation>
</comment>
<comment type="miscellaneous">
    <text evidence="2">Partially overlaps YBR063C.</text>
</comment>
<comment type="caution">
    <text evidence="3">Product of a dubious gene prediction unlikely to encode a functional protein. Because of that it is not part of the S.cerevisiae S288c complete/reference proteome set.</text>
</comment>